<feature type="signal peptide" evidence="2">
    <location>
        <begin position="1"/>
        <end position="19"/>
    </location>
</feature>
<feature type="chain" id="PRO_0000280610" description="Chitinase domain-containing protein 1">
    <location>
        <begin position="20"/>
        <end position="393"/>
    </location>
</feature>
<feature type="domain" description="GH18" evidence="3">
    <location>
        <begin position="79"/>
        <end position="393"/>
    </location>
</feature>
<reference key="1">
    <citation type="submission" date="2004-11" db="EMBL/GenBank/DDBJ databases">
        <authorList>
            <consortium name="The German cDNA consortium"/>
        </authorList>
    </citation>
    <scope>NUCLEOTIDE SEQUENCE [LARGE SCALE MRNA]</scope>
    <source>
        <tissue>Heart</tissue>
    </source>
</reference>
<name>CHID1_PONAB</name>
<accession>Q5RFF6</accession>
<keyword id="KW-0391">Immunity</keyword>
<keyword id="KW-0399">Innate immunity</keyword>
<keyword id="KW-0458">Lysosome</keyword>
<keyword id="KW-1185">Reference proteome</keyword>
<keyword id="KW-0964">Secreted</keyword>
<keyword id="KW-0732">Signal</keyword>
<organism>
    <name type="scientific">Pongo abelii</name>
    <name type="common">Sumatran orangutan</name>
    <name type="synonym">Pongo pygmaeus abelii</name>
    <dbReference type="NCBI Taxonomy" id="9601"/>
    <lineage>
        <taxon>Eukaryota</taxon>
        <taxon>Metazoa</taxon>
        <taxon>Chordata</taxon>
        <taxon>Craniata</taxon>
        <taxon>Vertebrata</taxon>
        <taxon>Euteleostomi</taxon>
        <taxon>Mammalia</taxon>
        <taxon>Eutheria</taxon>
        <taxon>Euarchontoglires</taxon>
        <taxon>Primates</taxon>
        <taxon>Haplorrhini</taxon>
        <taxon>Catarrhini</taxon>
        <taxon>Hominidae</taxon>
        <taxon>Pongo</taxon>
    </lineage>
</organism>
<sequence length="393" mass="44925">MRTLFNLLWLALACSPVHATLSKSDAKKAASKTLLEKSQFSDKPVQERGLVVTDLKAESVVLEHRSYCSAKARDRHFAGDVLGYVTPWNSHGYDVTKVFGSKFTQISPVWLQLKRRGREMFEVTGLHDVDQGWMRAVRKHAKGLHIVPRLLFEDWTYDDFRNVLDSEDEIEELSKTVVQVAKNQHFDGFVVEVWNQLLSQKRVGLIHMLTHLAEALHQARLLALLVIPPAITPGTDQLGMFTHKEFEQLAPVLDGFSLMTYDYSTAHQPGPNAPLSWVRACVQVLDPKSKWRSKILLGLNFYGMDYATSKDAREPVVGARYIQTLKDHRPRMVWDSQASEHFFEYKKSRSGRHVVFYPTLKSLQVRLELARELGVGVSIWELGQGLDYFYDLL</sequence>
<proteinExistence type="evidence at transcript level"/>
<comment type="function">
    <text evidence="1">Saccharide- and LPS-binding protein with possible roles in pathogen sensing and endotoxin neutralization. Ligand-binding specificity relates to the length of the oligosaccharides, with preference for chitotetraose (in vitro) (By similarity).</text>
</comment>
<comment type="subunit">
    <text evidence="1">Interacts with STAB1.</text>
</comment>
<comment type="subcellular location">
    <subcellularLocation>
        <location>Secreted</location>
    </subcellularLocation>
    <subcellularLocation>
        <location evidence="1">Lysosome</location>
    </subcellularLocation>
</comment>
<comment type="similarity">
    <text evidence="4">Belongs to the glycosyl hydrolase 18 family.</text>
</comment>
<gene>
    <name type="primary">CHID1</name>
</gene>
<protein>
    <recommendedName>
        <fullName>Chitinase domain-containing protein 1</fullName>
    </recommendedName>
</protein>
<evidence type="ECO:0000250" key="1"/>
<evidence type="ECO:0000255" key="2"/>
<evidence type="ECO:0000255" key="3">
    <source>
        <dbReference type="PROSITE-ProRule" id="PRU01258"/>
    </source>
</evidence>
<evidence type="ECO:0000305" key="4"/>
<dbReference type="EMBL" id="CR857202">
    <property type="protein sequence ID" value="CAH89501.1"/>
    <property type="molecule type" value="mRNA"/>
</dbReference>
<dbReference type="RefSeq" id="NP_001127157.1">
    <property type="nucleotide sequence ID" value="NM_001133685.2"/>
</dbReference>
<dbReference type="RefSeq" id="XP_024110398.1">
    <property type="nucleotide sequence ID" value="XM_024254630.3"/>
</dbReference>
<dbReference type="RefSeq" id="XP_063584022.1">
    <property type="nucleotide sequence ID" value="XM_063727952.1"/>
</dbReference>
<dbReference type="SMR" id="Q5RFF6"/>
<dbReference type="FunCoup" id="Q5RFF6">
    <property type="interactions" value="952"/>
</dbReference>
<dbReference type="STRING" id="9601.ENSPPYP00000003363"/>
<dbReference type="Ensembl" id="ENSPPYT00000052778.1">
    <property type="protein sequence ID" value="ENSPPYP00000031728.1"/>
    <property type="gene ID" value="ENSPPYG00000002892.2"/>
</dbReference>
<dbReference type="GeneID" id="100174208"/>
<dbReference type="KEGG" id="pon:100174208"/>
<dbReference type="CTD" id="66005"/>
<dbReference type="eggNOG" id="KOG2091">
    <property type="taxonomic scope" value="Eukaryota"/>
</dbReference>
<dbReference type="GeneTree" id="ENSGT00390000012069"/>
<dbReference type="HOGENOM" id="CLU_035132_2_0_1"/>
<dbReference type="InParanoid" id="Q5RFF6"/>
<dbReference type="OrthoDB" id="10254444at2759"/>
<dbReference type="Proteomes" id="UP000001595">
    <property type="component" value="Chromosome 11"/>
</dbReference>
<dbReference type="GO" id="GO:0012505">
    <property type="term" value="C:endomembrane system"/>
    <property type="evidence" value="ECO:0007669"/>
    <property type="project" value="TreeGrafter"/>
</dbReference>
<dbReference type="GO" id="GO:0005576">
    <property type="term" value="C:extracellular region"/>
    <property type="evidence" value="ECO:0007669"/>
    <property type="project" value="UniProtKB-SubCell"/>
</dbReference>
<dbReference type="GO" id="GO:0005764">
    <property type="term" value="C:lysosome"/>
    <property type="evidence" value="ECO:0007669"/>
    <property type="project" value="UniProtKB-SubCell"/>
</dbReference>
<dbReference type="GO" id="GO:0008061">
    <property type="term" value="F:chitin binding"/>
    <property type="evidence" value="ECO:0007669"/>
    <property type="project" value="InterPro"/>
</dbReference>
<dbReference type="GO" id="GO:0070492">
    <property type="term" value="F:oligosaccharide binding"/>
    <property type="evidence" value="ECO:0007669"/>
    <property type="project" value="TreeGrafter"/>
</dbReference>
<dbReference type="GO" id="GO:0005975">
    <property type="term" value="P:carbohydrate metabolic process"/>
    <property type="evidence" value="ECO:0007669"/>
    <property type="project" value="InterPro"/>
</dbReference>
<dbReference type="GO" id="GO:0045087">
    <property type="term" value="P:innate immune response"/>
    <property type="evidence" value="ECO:0007669"/>
    <property type="project" value="UniProtKB-KW"/>
</dbReference>
<dbReference type="CDD" id="cd02876">
    <property type="entry name" value="GH18_SI-CLP"/>
    <property type="match status" value="1"/>
</dbReference>
<dbReference type="FunFam" id="3.10.50.10:FF:000002">
    <property type="entry name" value="Chitinase domain-containing protein 1"/>
    <property type="match status" value="1"/>
</dbReference>
<dbReference type="FunFam" id="3.20.20.80:FF:000028">
    <property type="entry name" value="Chitinase domain-containing protein 1"/>
    <property type="match status" value="1"/>
</dbReference>
<dbReference type="Gene3D" id="3.10.50.10">
    <property type="match status" value="1"/>
</dbReference>
<dbReference type="Gene3D" id="1.10.8.360">
    <property type="entry name" value="3,6-anhydro-alpha-l-galactosidase"/>
    <property type="match status" value="1"/>
</dbReference>
<dbReference type="Gene3D" id="3.20.20.80">
    <property type="entry name" value="Glycosidases"/>
    <property type="match status" value="1"/>
</dbReference>
<dbReference type="InterPro" id="IPR011583">
    <property type="entry name" value="Chitinase_II/V-like_cat"/>
</dbReference>
<dbReference type="InterPro" id="IPR029070">
    <property type="entry name" value="Chitinase_insertion_sf"/>
</dbReference>
<dbReference type="InterPro" id="IPR001223">
    <property type="entry name" value="Glyco_hydro18_cat"/>
</dbReference>
<dbReference type="InterPro" id="IPR017853">
    <property type="entry name" value="Glycoside_hydrolase_SF"/>
</dbReference>
<dbReference type="PANTHER" id="PTHR46066:SF2">
    <property type="entry name" value="CHITINASE DOMAIN-CONTAINING PROTEIN 1"/>
    <property type="match status" value="1"/>
</dbReference>
<dbReference type="PANTHER" id="PTHR46066">
    <property type="entry name" value="CHITINASE DOMAIN-CONTAINING PROTEIN 1 FAMILY MEMBER"/>
    <property type="match status" value="1"/>
</dbReference>
<dbReference type="Pfam" id="PF00704">
    <property type="entry name" value="Glyco_hydro_18"/>
    <property type="match status" value="1"/>
</dbReference>
<dbReference type="SMART" id="SM00636">
    <property type="entry name" value="Glyco_18"/>
    <property type="match status" value="1"/>
</dbReference>
<dbReference type="SUPFAM" id="SSF51445">
    <property type="entry name" value="(Trans)glycosidases"/>
    <property type="match status" value="1"/>
</dbReference>
<dbReference type="PROSITE" id="PS51910">
    <property type="entry name" value="GH18_2"/>
    <property type="match status" value="1"/>
</dbReference>